<sequence>MPDRKIGDYVVGAEIGRGSFANVYKGYNSKTQVSVAIKSVIKSRLRNKKLIENLEVEISILKNLKHPHVVALLDCEQSKHYFHLLMEYCSLGDLSYFITKREELISNHPLITGVFKKYPSPENSKGLNEVITINFVQQLASALKFLRSQNLVHRDIKPQNLLLSPPVSREVFEDRKYTGLWELPVLKIADFGFARFLPATSMAETLCGSPLYMAPEILRYEKYNAKADLWSVGAVVYEMSVGTPPFPAHNHVELLRNIERQKDKISFPKVAQVPPEIIQLICGLLKQQATERMSFQEFFNDPVITTKLQPCSDEPLLPQNQHIDENLFISEYLPRNSITDKNINNNITNIAKNGVEEALLEEEDEEEDQDQLPSKNDNIQHMEPDSSMLLNKTTQKQTEVQSQPRRELVSEKDYVVVEKRAVEVNALADELEHAGSGALAMQLTNNVGTPYTRRYSSSSRSSSTGSNQRRPSFGDRKVPISISPTNALSKAINIASNRLFKQPSPPKATPVLLEEKDKDKNTERLTSTVFNQNMLNSTTTREITRPLHSLTITSSTSDEEIIQRLSNLTTKAYAIKLLAEIKFSQLAPLPPSNETAVFDNYGDDEGTQSGYNNEPLSPILIKTIGEEGIALYVKTLFLLSKAMNIAMEWWRLNSLSRPASPKLNDLVQWIRGKFNESLEKAEFIKLKLQNAKEQLEESESDTDKTVVAEKLIFDRAIEISRIAVVNELKNDDLVGTELSYATAIWMLEALLEPDDTEESKLDDEDRKMIEKFISSIGNRLSVLRKKIESTSQETRK</sequence>
<keyword id="KW-0067">ATP-binding</keyword>
<keyword id="KW-0072">Autophagy</keyword>
<keyword id="KW-0963">Cytoplasm</keyword>
<keyword id="KW-0418">Kinase</keyword>
<keyword id="KW-0472">Membrane</keyword>
<keyword id="KW-0547">Nucleotide-binding</keyword>
<keyword id="KW-0653">Protein transport</keyword>
<keyword id="KW-0723">Serine/threonine-protein kinase</keyword>
<keyword id="KW-0808">Transferase</keyword>
<keyword id="KW-0813">Transport</keyword>
<organism>
    <name type="scientific">Komagataella pastoris</name>
    <name type="common">Yeast</name>
    <name type="synonym">Pichia pastoris</name>
    <dbReference type="NCBI Taxonomy" id="4922"/>
    <lineage>
        <taxon>Eukaryota</taxon>
        <taxon>Fungi</taxon>
        <taxon>Dikarya</taxon>
        <taxon>Ascomycota</taxon>
        <taxon>Saccharomycotina</taxon>
        <taxon>Pichiomycetes</taxon>
        <taxon>Pichiales</taxon>
        <taxon>Pichiaceae</taxon>
        <taxon>Komagataella</taxon>
    </lineage>
</organism>
<gene>
    <name evidence="7" type="primary">ATG1</name>
    <name type="synonym">GSA10</name>
    <name evidence="6" type="synonym">PAZ1</name>
</gene>
<dbReference type="EC" id="2.7.11.1" evidence="1"/>
<dbReference type="EMBL" id="AY075104">
    <property type="protein sequence ID" value="AAL77195.1"/>
    <property type="molecule type" value="Genomic_DNA"/>
</dbReference>
<dbReference type="SMR" id="Q8TGI1"/>
<dbReference type="GO" id="GO:0005776">
    <property type="term" value="C:autophagosome"/>
    <property type="evidence" value="ECO:0007669"/>
    <property type="project" value="TreeGrafter"/>
</dbReference>
<dbReference type="GO" id="GO:0005829">
    <property type="term" value="C:cytosol"/>
    <property type="evidence" value="ECO:0007669"/>
    <property type="project" value="TreeGrafter"/>
</dbReference>
<dbReference type="GO" id="GO:0034045">
    <property type="term" value="C:phagophore assembly site membrane"/>
    <property type="evidence" value="ECO:0007669"/>
    <property type="project" value="UniProtKB-SubCell"/>
</dbReference>
<dbReference type="GO" id="GO:0005524">
    <property type="term" value="F:ATP binding"/>
    <property type="evidence" value="ECO:0007669"/>
    <property type="project" value="UniProtKB-KW"/>
</dbReference>
<dbReference type="GO" id="GO:0106310">
    <property type="term" value="F:protein serine kinase activity"/>
    <property type="evidence" value="ECO:0007669"/>
    <property type="project" value="RHEA"/>
</dbReference>
<dbReference type="GO" id="GO:0004674">
    <property type="term" value="F:protein serine/threonine kinase activity"/>
    <property type="evidence" value="ECO:0007669"/>
    <property type="project" value="UniProtKB-KW"/>
</dbReference>
<dbReference type="GO" id="GO:0000045">
    <property type="term" value="P:autophagosome assembly"/>
    <property type="evidence" value="ECO:0007669"/>
    <property type="project" value="TreeGrafter"/>
</dbReference>
<dbReference type="GO" id="GO:0000422">
    <property type="term" value="P:autophagy of mitochondrion"/>
    <property type="evidence" value="ECO:0007669"/>
    <property type="project" value="TreeGrafter"/>
</dbReference>
<dbReference type="GO" id="GO:0030447">
    <property type="term" value="P:filamentous growth"/>
    <property type="evidence" value="ECO:0007669"/>
    <property type="project" value="UniProtKB-ARBA"/>
</dbReference>
<dbReference type="GO" id="GO:0034727">
    <property type="term" value="P:piecemeal microautophagy of the nucleus"/>
    <property type="evidence" value="ECO:0007669"/>
    <property type="project" value="TreeGrafter"/>
</dbReference>
<dbReference type="GO" id="GO:0015031">
    <property type="term" value="P:protein transport"/>
    <property type="evidence" value="ECO:0007669"/>
    <property type="project" value="UniProtKB-KW"/>
</dbReference>
<dbReference type="GO" id="GO:0010506">
    <property type="term" value="P:regulation of autophagy"/>
    <property type="evidence" value="ECO:0007669"/>
    <property type="project" value="InterPro"/>
</dbReference>
<dbReference type="GO" id="GO:0042594">
    <property type="term" value="P:response to starvation"/>
    <property type="evidence" value="ECO:0007669"/>
    <property type="project" value="TreeGrafter"/>
</dbReference>
<dbReference type="GO" id="GO:0061709">
    <property type="term" value="P:reticulophagy"/>
    <property type="evidence" value="ECO:0007669"/>
    <property type="project" value="TreeGrafter"/>
</dbReference>
<dbReference type="CDD" id="cd14009">
    <property type="entry name" value="STKc_ATG1_ULK_like"/>
    <property type="match status" value="1"/>
</dbReference>
<dbReference type="FunFam" id="3.30.200.20:FF:000042">
    <property type="entry name" value="Aurora kinase A"/>
    <property type="match status" value="1"/>
</dbReference>
<dbReference type="FunFam" id="1.10.510.10:FF:000817">
    <property type="entry name" value="Serine/threonine-protein kinase ATG1"/>
    <property type="match status" value="1"/>
</dbReference>
<dbReference type="Gene3D" id="3.30.200.20">
    <property type="entry name" value="Phosphorylase Kinase, domain 1"/>
    <property type="match status" value="1"/>
</dbReference>
<dbReference type="Gene3D" id="1.10.510.10">
    <property type="entry name" value="Transferase(Phosphotransferase) domain 1"/>
    <property type="match status" value="1"/>
</dbReference>
<dbReference type="InterPro" id="IPR045269">
    <property type="entry name" value="Atg1-like"/>
</dbReference>
<dbReference type="InterPro" id="IPR048941">
    <property type="entry name" value="ATG1-like_MIT2"/>
</dbReference>
<dbReference type="InterPro" id="IPR022708">
    <property type="entry name" value="Atg1-like_tMIT"/>
</dbReference>
<dbReference type="InterPro" id="IPR011009">
    <property type="entry name" value="Kinase-like_dom_sf"/>
</dbReference>
<dbReference type="InterPro" id="IPR000719">
    <property type="entry name" value="Prot_kinase_dom"/>
</dbReference>
<dbReference type="InterPro" id="IPR017441">
    <property type="entry name" value="Protein_kinase_ATP_BS"/>
</dbReference>
<dbReference type="InterPro" id="IPR008271">
    <property type="entry name" value="Ser/Thr_kinase_AS"/>
</dbReference>
<dbReference type="PANTHER" id="PTHR24348:SF22">
    <property type="entry name" value="NON-SPECIFIC SERINE_THREONINE PROTEIN KINASE"/>
    <property type="match status" value="1"/>
</dbReference>
<dbReference type="PANTHER" id="PTHR24348">
    <property type="entry name" value="SERINE/THREONINE-PROTEIN KINASE UNC-51-RELATED"/>
    <property type="match status" value="1"/>
</dbReference>
<dbReference type="Pfam" id="PF12063">
    <property type="entry name" value="ATG1-like_MIT1"/>
    <property type="match status" value="1"/>
</dbReference>
<dbReference type="Pfam" id="PF21127">
    <property type="entry name" value="ATG1-like_MIT2"/>
    <property type="match status" value="1"/>
</dbReference>
<dbReference type="Pfam" id="PF00069">
    <property type="entry name" value="Pkinase"/>
    <property type="match status" value="1"/>
</dbReference>
<dbReference type="SMART" id="SM00220">
    <property type="entry name" value="S_TKc"/>
    <property type="match status" value="1"/>
</dbReference>
<dbReference type="SUPFAM" id="SSF56112">
    <property type="entry name" value="Protein kinase-like (PK-like)"/>
    <property type="match status" value="1"/>
</dbReference>
<dbReference type="PROSITE" id="PS00107">
    <property type="entry name" value="PROTEIN_KINASE_ATP"/>
    <property type="match status" value="1"/>
</dbReference>
<dbReference type="PROSITE" id="PS50011">
    <property type="entry name" value="PROTEIN_KINASE_DOM"/>
    <property type="match status" value="1"/>
</dbReference>
<dbReference type="PROSITE" id="PS00108">
    <property type="entry name" value="PROTEIN_KINASE_ST"/>
    <property type="match status" value="1"/>
</dbReference>
<reference key="1">
    <citation type="journal article" date="2001" name="J. Biol. Chem.">
        <title>GSA11 encodes a unique 208-kDa protein required for pexophagy and autophagy in Pichia pastoris.</title>
        <authorList>
            <person name="Stromhaug P.E."/>
            <person name="Bevan A."/>
            <person name="Dunn W.A. Jr."/>
        </authorList>
    </citation>
    <scope>NUCLEOTIDE SEQUENCE [GENOMIC DNA]</scope>
    <scope>FUNCTION</scope>
</reference>
<reference key="2">
    <citation type="journal article" date="2003" name="Dev. Cell">
        <title>A unified nomenclature for yeast autophagy-related genes.</title>
        <authorList>
            <person name="Klionsky D.J."/>
            <person name="Cregg J.M."/>
            <person name="Dunn W.A. Jr."/>
            <person name="Emr S.D."/>
            <person name="Sakai Y."/>
            <person name="Sandoval I.V."/>
            <person name="Sibirny A."/>
            <person name="Subramani S."/>
            <person name="Thumm M."/>
            <person name="Veenhuis M."/>
            <person name="Ohsumi Y."/>
        </authorList>
    </citation>
    <scope>NOMENCLATURE</scope>
</reference>
<proteinExistence type="inferred from homology"/>
<protein>
    <recommendedName>
        <fullName evidence="1">Serine/threonine-protein kinase ATG1</fullName>
        <ecNumber evidence="1">2.7.11.1</ecNumber>
    </recommendedName>
    <alternativeName>
        <fullName evidence="1">Autophagy-related protein 1</fullName>
    </alternativeName>
    <alternativeName>
        <fullName evidence="6">Glucose-induced selective autophagy protein 10</fullName>
    </alternativeName>
    <alternativeName>
        <fullName>Pexophagy zeocin-resistant mutant protein 1</fullName>
    </alternativeName>
</protein>
<accession>Q8TGI1</accession>
<evidence type="ECO:0000250" key="1">
    <source>
        <dbReference type="UniProtKB" id="P53104"/>
    </source>
</evidence>
<evidence type="ECO:0000255" key="2">
    <source>
        <dbReference type="PROSITE-ProRule" id="PRU00159"/>
    </source>
</evidence>
<evidence type="ECO:0000255" key="3">
    <source>
        <dbReference type="PROSITE-ProRule" id="PRU10027"/>
    </source>
</evidence>
<evidence type="ECO:0000256" key="4">
    <source>
        <dbReference type="SAM" id="MobiDB-lite"/>
    </source>
</evidence>
<evidence type="ECO:0000269" key="5">
    <source>
    </source>
</evidence>
<evidence type="ECO:0000303" key="6">
    <source>
    </source>
</evidence>
<evidence type="ECO:0000303" key="7">
    <source>
    </source>
</evidence>
<comment type="function">
    <text evidence="1 5">Serine/threonine protein kinase involved in the cytoplasm to vacuole transport (Cvt) and found to be essential in autophagy, where it is required for the formation of autophagosomes (PubMed:11533052). Involved in the clearance of protein aggregates which cannot be efficiently cleared by the proteasome. Required for selective autophagic degradation of the nucleus (nucleophagy) as well as for mitophagy which contributes to regulate mitochondrial quantity and quality by eliminating the mitochondria to a basal level to fulfill cellular energy requirements and preventing excess ROS production. Also involved in endoplasmic reticulum-specific autophagic process, in selective removal of ER-associated degradation (ERAD) substrates. Plays a key role in ATG9 and ATG23 cycling through the pre-autophagosomal structure and is necessary to promote ATG18 binding to ATG9 through phosphorylation of ATG9. Catalyzes phosphorylation of ATG4, decreasing the interaction between ATG4 and ATG8 and impairing deconjugation of PE-conjugated forms of ATG8 (By similarity).</text>
</comment>
<comment type="catalytic activity">
    <reaction evidence="1">
        <text>L-seryl-[protein] + ATP = O-phospho-L-seryl-[protein] + ADP + H(+)</text>
        <dbReference type="Rhea" id="RHEA:17989"/>
        <dbReference type="Rhea" id="RHEA-COMP:9863"/>
        <dbReference type="Rhea" id="RHEA-COMP:11604"/>
        <dbReference type="ChEBI" id="CHEBI:15378"/>
        <dbReference type="ChEBI" id="CHEBI:29999"/>
        <dbReference type="ChEBI" id="CHEBI:30616"/>
        <dbReference type="ChEBI" id="CHEBI:83421"/>
        <dbReference type="ChEBI" id="CHEBI:456216"/>
        <dbReference type="EC" id="2.7.11.1"/>
    </reaction>
</comment>
<comment type="catalytic activity">
    <reaction evidence="1">
        <text>L-threonyl-[protein] + ATP = O-phospho-L-threonyl-[protein] + ADP + H(+)</text>
        <dbReference type="Rhea" id="RHEA:46608"/>
        <dbReference type="Rhea" id="RHEA-COMP:11060"/>
        <dbReference type="Rhea" id="RHEA-COMP:11605"/>
        <dbReference type="ChEBI" id="CHEBI:15378"/>
        <dbReference type="ChEBI" id="CHEBI:30013"/>
        <dbReference type="ChEBI" id="CHEBI:30616"/>
        <dbReference type="ChEBI" id="CHEBI:61977"/>
        <dbReference type="ChEBI" id="CHEBI:456216"/>
        <dbReference type="EC" id="2.7.11.1"/>
    </reaction>
</comment>
<comment type="subunit">
    <text evidence="1">Homodimer. Forms a ternary complex with ATG13 and ATG17.</text>
</comment>
<comment type="subcellular location">
    <subcellularLocation>
        <location evidence="1">Cytoplasm</location>
    </subcellularLocation>
    <subcellularLocation>
        <location evidence="1">Preautophagosomal structure membrane</location>
        <topology evidence="1">Peripheral membrane protein</topology>
    </subcellularLocation>
</comment>
<comment type="similarity">
    <text evidence="2">Belongs to the protein kinase superfamily. Ser/Thr protein kinase family. APG1/unc-51/ULK1 subfamily.</text>
</comment>
<name>ATG1_PICPA</name>
<feature type="chain" id="PRO_0000085651" description="Serine/threonine-protein kinase ATG1">
    <location>
        <begin position="1"/>
        <end position="796"/>
    </location>
</feature>
<feature type="domain" description="Protein kinase" evidence="2">
    <location>
        <begin position="9"/>
        <end position="304"/>
    </location>
</feature>
<feature type="region of interest" description="Disordered" evidence="4">
    <location>
        <begin position="360"/>
        <end position="382"/>
    </location>
</feature>
<feature type="region of interest" description="Disordered" evidence="4">
    <location>
        <begin position="389"/>
        <end position="408"/>
    </location>
</feature>
<feature type="region of interest" description="Disordered" evidence="4">
    <location>
        <begin position="450"/>
        <end position="480"/>
    </location>
</feature>
<feature type="compositionally biased region" description="Acidic residues" evidence="4">
    <location>
        <begin position="360"/>
        <end position="370"/>
    </location>
</feature>
<feature type="compositionally biased region" description="Polar residues" evidence="4">
    <location>
        <begin position="389"/>
        <end position="403"/>
    </location>
</feature>
<feature type="compositionally biased region" description="Low complexity" evidence="4">
    <location>
        <begin position="453"/>
        <end position="470"/>
    </location>
</feature>
<feature type="active site" description="Proton acceptor" evidence="2 3">
    <location>
        <position position="155"/>
    </location>
</feature>
<feature type="binding site" evidence="2">
    <location>
        <begin position="15"/>
        <end position="23"/>
    </location>
    <ligand>
        <name>ATP</name>
        <dbReference type="ChEBI" id="CHEBI:30616"/>
    </ligand>
</feature>
<feature type="binding site" evidence="2">
    <location>
        <position position="38"/>
    </location>
    <ligand>
        <name>ATP</name>
        <dbReference type="ChEBI" id="CHEBI:30616"/>
    </ligand>
</feature>